<comment type="function">
    <text evidence="4 7">Short chain dehydrogenase; part of the gene cluster that mediates the biosynthesis of the dimeric xanthones cryptosporioptides (PubMed:30996871). The pathway begins with the synthesis of atrochrysone thioester by the polyketide synthase dmx-nrPKS (Probable). The atrochrysone carboxyl ACP thioesterase dmxR1 then breaks the thioester bond and releases the atrochrysone carboxylic acid from dmx-nrPKS (Probable). Atrochrysone carboxylic acid is decarboxylated by the decarboxylase dmxR15, and oxidized by the anthrone oxygenase dmxR16 to yield emodin (Probable). Emodin is then reduced to emodin hydroquinone by the oxidoreductase dmxR7 (Probable). A-ring reduction by the short chain dehydrogenase dmxR18, dehydration by the scytalone dehydratase-like protein dmxR17 and probable spontaneous re-oxidation, results in overall deoxygenation to chrysophanol (PubMed:30996871). Baeyer-Villiger oxidation by the Baeyer-Villiger monooxygenase (BVMO) dmxR6 then yields monodictylactone in equilibrium with monodictyphenone (PubMed:30996871). In the case of the cryptosporioptides biosynthesis, monodictylactone is reduced at C-12 to an alcohol (by the short chain dehydrogenases dmxR12 or dmxR8) and hydroxylated at C-5 by dmxR9, yielding the electron-rich aromatic which could eliminate H(2)O to form the ortho-quinonemethide, followed by tautomerisation to paraquinone and complete the formal reduction to produce the 10-methylgroup (Probable). Conjugate addition of C-4a-OH to the resulting paraquinone by the monooxygenase dmxR10 then gives cyclohexadienone, which is then reduced at C-5 by the short chain dehydrogenase dmxR3 to give the dihydroxanthone (Probable). The 6,7-epoxide in the cryptosporioptides could be introduced by the cytochrome P450 monooxygenase dmxL3 (Probable). The highly reducing PKS dmxL2 manufactures butyrate, which is further carboxylated by dmxL1 to form ethylmalonate (PubMed:30996871). It is not yet clear whether the carboxylation occurs while the butyrate is attached to the ACP of dmxL2, but this unusual fungal metabolite could then be esterified to O-5 by the O-acetyltransferase dmxR13 (PubMed:30996871). Finally, dimerization performed by dmxR5 gives the observed dimers cryptosporioptides A, B and C as the final products of the pathway (PubMed:30996871).</text>
</comment>
<comment type="pathway">
    <text evidence="7">Secondary metabolite biosynthesis.</text>
</comment>
<comment type="similarity">
    <text evidence="6">Belongs to the short-chain dehydrogenases/reductases (SDR) family.</text>
</comment>
<organism>
    <name type="scientific">Cryptosporiopsis sp. (strain 8999)</name>
    <dbReference type="NCBI Taxonomy" id="2572248"/>
    <lineage>
        <taxon>Eukaryota</taxon>
        <taxon>Fungi</taxon>
        <taxon>Dikarya</taxon>
        <taxon>Ascomycota</taxon>
        <taxon>Pezizomycotina</taxon>
        <taxon>Leotiomycetes</taxon>
        <taxon>Helotiales</taxon>
        <taxon>Dermateaceae</taxon>
        <taxon>Cryptosporiopsis</taxon>
    </lineage>
</organism>
<dbReference type="EC" id="1.1.1.-" evidence="7"/>
<dbReference type="EMBL" id="MK182094">
    <property type="protein sequence ID" value="QCL09099.1"/>
    <property type="molecule type" value="Genomic_DNA"/>
</dbReference>
<dbReference type="SMR" id="A0A4P8DJW5"/>
<dbReference type="GO" id="GO:0016491">
    <property type="term" value="F:oxidoreductase activity"/>
    <property type="evidence" value="ECO:0007669"/>
    <property type="project" value="UniProtKB-KW"/>
</dbReference>
<dbReference type="Gene3D" id="3.40.50.720">
    <property type="entry name" value="NAD(P)-binding Rossmann-like Domain"/>
    <property type="match status" value="1"/>
</dbReference>
<dbReference type="InterPro" id="IPR036291">
    <property type="entry name" value="NAD(P)-bd_dom_sf"/>
</dbReference>
<dbReference type="InterPro" id="IPR002347">
    <property type="entry name" value="SDR_fam"/>
</dbReference>
<dbReference type="PANTHER" id="PTHR43157:SF31">
    <property type="entry name" value="PHOSPHATIDYLINOSITOL-GLYCAN BIOSYNTHESIS CLASS F PROTEIN"/>
    <property type="match status" value="1"/>
</dbReference>
<dbReference type="PANTHER" id="PTHR43157">
    <property type="entry name" value="PHOSPHATIDYLINOSITOL-GLYCAN BIOSYNTHESIS CLASS F PROTEIN-RELATED"/>
    <property type="match status" value="1"/>
</dbReference>
<dbReference type="Pfam" id="PF00106">
    <property type="entry name" value="adh_short"/>
    <property type="match status" value="1"/>
</dbReference>
<dbReference type="PRINTS" id="PR00081">
    <property type="entry name" value="GDHRDH"/>
</dbReference>
<dbReference type="SUPFAM" id="SSF51735">
    <property type="entry name" value="NAD(P)-binding Rossmann-fold domains"/>
    <property type="match status" value="1"/>
</dbReference>
<feature type="chain" id="PRO_0000453447" description="Short chain dehydrogenase/reductase dmxR8">
    <location>
        <begin position="1"/>
        <end position="324"/>
    </location>
</feature>
<feature type="active site" description="Proton donor" evidence="2">
    <location>
        <position position="163"/>
    </location>
</feature>
<feature type="active site" description="Proton acceptor" evidence="3">
    <location>
        <position position="200"/>
    </location>
</feature>
<feature type="active site" description="Lowers pKa of active site Tyr" evidence="2">
    <location>
        <position position="204"/>
    </location>
</feature>
<feature type="binding site" evidence="1">
    <location>
        <position position="33"/>
    </location>
    <ligand>
        <name>NADP(+)</name>
        <dbReference type="ChEBI" id="CHEBI:58349"/>
    </ligand>
</feature>
<feature type="binding site" evidence="1">
    <location>
        <position position="58"/>
    </location>
    <ligand>
        <name>NADP(+)</name>
        <dbReference type="ChEBI" id="CHEBI:58349"/>
    </ligand>
</feature>
<feature type="binding site" evidence="1">
    <location>
        <position position="83"/>
    </location>
    <ligand>
        <name>NADP(+)</name>
        <dbReference type="ChEBI" id="CHEBI:58349"/>
    </ligand>
</feature>
<feature type="binding site" evidence="2">
    <location>
        <position position="110"/>
    </location>
    <ligand>
        <name>NADP(+)</name>
        <dbReference type="ChEBI" id="CHEBI:58349"/>
    </ligand>
</feature>
<feature type="binding site" evidence="2">
    <location>
        <position position="200"/>
    </location>
    <ligand>
        <name>NADP(+)</name>
        <dbReference type="ChEBI" id="CHEBI:58349"/>
    </ligand>
</feature>
<feature type="binding site" evidence="2">
    <location>
        <position position="204"/>
    </location>
    <ligand>
        <name>NADP(+)</name>
        <dbReference type="ChEBI" id="CHEBI:58349"/>
    </ligand>
</feature>
<gene>
    <name evidence="5" type="primary">dmxR8</name>
</gene>
<protein>
    <recommendedName>
        <fullName evidence="5">Short chain dehydrogenase/reductase dmxR8</fullName>
        <shortName evidence="5">SDR dmxR8</shortName>
        <ecNumber evidence="7">1.1.1.-</ecNumber>
    </recommendedName>
    <alternativeName>
        <fullName evidence="5">Dimeric xanthone biosynthesis cluster protein R8</fullName>
    </alternativeName>
</protein>
<evidence type="ECO:0000250" key="1">
    <source>
        <dbReference type="UniProtKB" id="L0E2Z4"/>
    </source>
</evidence>
<evidence type="ECO:0000250" key="2">
    <source>
        <dbReference type="UniProtKB" id="O93868"/>
    </source>
</evidence>
<evidence type="ECO:0000255" key="3">
    <source>
        <dbReference type="PROSITE-ProRule" id="PRU10001"/>
    </source>
</evidence>
<evidence type="ECO:0000269" key="4">
    <source>
    </source>
</evidence>
<evidence type="ECO:0000303" key="5">
    <source>
    </source>
</evidence>
<evidence type="ECO:0000305" key="6"/>
<evidence type="ECO:0000305" key="7">
    <source>
    </source>
</evidence>
<sequence>MGFLYSQLFKSLPYPTGNYSGKTIVITGSNVGLGKEAARHYVRLGASKMILAVRSLDKGHDAKHDIEGTTKCADNVIEVWKLDMASYDSVQKFAARVVTELPRVDIFIANAGIAPGSYRTAEDNESSITVNVVSTFLLAALVMPKMKSTAATFKTRPTFTITSSDVHGHTTFPQKSAPDGQIIATVNDKATAEKIWDDMYPISKLLEVLGVRSIAEQNPASKFPVTINCVNPGLCHSELGRDFPTIGFWLIKFFLARTTEVGSRTLVHAGSQGEDSHGQYMSDCEIGTPAPFVTSVEGKETQDRVWNELVKKLDAIKPGVTSNF</sequence>
<name>DMXR8_CRYX8</name>
<keyword id="KW-0521">NADP</keyword>
<keyword id="KW-0560">Oxidoreductase</keyword>
<reference key="1">
    <citation type="journal article" date="2019" name="Chem. Sci.">
        <title>Structure revision of cryptosporioptides and determination of the genetic basis for dimeric xanthone biosynthesis in fungi.</title>
        <authorList>
            <person name="Greco C."/>
            <person name="de Mattos-Shipley K."/>
            <person name="Bailey A.M."/>
            <person name="Mulholland N.P."/>
            <person name="Vincent J.L."/>
            <person name="Willis C.L."/>
            <person name="Cox R.J."/>
            <person name="Simpson T.J."/>
        </authorList>
    </citation>
    <scope>NUCLEOTIDE SEQUENCE [GENOMIC DNA]</scope>
    <scope>FUNCTION</scope>
    <scope>PATHWAY</scope>
    <source>
        <strain>8999</strain>
    </source>
</reference>
<accession>A0A4P8DJW5</accession>
<proteinExistence type="inferred from homology"/>